<name>MD2BP_HUMAN</name>
<proteinExistence type="evidence at protein level"/>
<gene>
    <name type="primary">MAD2L1BP</name>
    <name type="synonym">CMT2</name>
    <name type="synonym">KIAA0110</name>
</gene>
<protein>
    <recommendedName>
        <fullName>MAD2L1-binding protein</fullName>
    </recommendedName>
    <alternativeName>
        <fullName>Caught by MAD2 protein</fullName>
    </alternativeName>
    <alternativeName>
        <fullName evidence="3">p31(comet)</fullName>
    </alternativeName>
</protein>
<feature type="chain" id="PRO_0000096310" description="MAD2L1-binding protein">
    <location>
        <begin position="1"/>
        <end position="274"/>
    </location>
</feature>
<feature type="region of interest" description="Interaction with MAD2L1">
    <location>
        <begin position="45"/>
        <end position="78"/>
    </location>
</feature>
<feature type="modified residue" description="Phosphoserine" evidence="6">
    <location>
        <position position="102"/>
    </location>
</feature>
<feature type="splice variant" id="VSP_046268" description="In isoform 2." evidence="4">
    <original>MAAPEAEVLSSAAVP</original>
    <variation>MARVPLGRSLTLSPRLEHNGMTSAHHNFRLPGSRDSPASASQVAEII</variation>
    <location>
        <begin position="1"/>
        <end position="15"/>
    </location>
</feature>
<feature type="mutagenesis site" description="Loss of interaction with MAD2L1 and disruption of ability to overcome spindle checkpoint-dependent mitotic arrest; when associated with A-191." evidence="2">
    <original>Q</original>
    <variation>A</variation>
    <location>
        <position position="83"/>
    </location>
</feature>
<feature type="mutagenesis site" description="Loss of interaction with MAD2L1 and disruption of ability to overcome spindle checkpoint-dependent mitotic arrest; when associated with A-83." evidence="2">
    <original>F</original>
    <variation>A</variation>
    <location>
        <position position="191"/>
    </location>
</feature>
<feature type="sequence conflict" description="In Ref. 2; BAG59665." evidence="5" ref="2">
    <original>S</original>
    <variation>G</variation>
    <location>
        <position position="133"/>
    </location>
</feature>
<feature type="sequence conflict" description="In Ref. 3; CAG33174." evidence="5" ref="3">
    <original>E</original>
    <variation>D</variation>
    <location>
        <position position="274"/>
    </location>
</feature>
<feature type="strand" evidence="7">
    <location>
        <begin position="55"/>
        <end position="59"/>
    </location>
</feature>
<feature type="helix" evidence="7">
    <location>
        <begin position="67"/>
        <end position="83"/>
    </location>
</feature>
<feature type="strand" evidence="7">
    <location>
        <begin position="86"/>
        <end position="89"/>
    </location>
</feature>
<feature type="helix" evidence="7">
    <location>
        <begin position="91"/>
        <end position="94"/>
    </location>
</feature>
<feature type="helix" evidence="7">
    <location>
        <begin position="120"/>
        <end position="123"/>
    </location>
</feature>
<feature type="helix" evidence="7">
    <location>
        <begin position="126"/>
        <end position="144"/>
    </location>
</feature>
<feature type="strand" evidence="7">
    <location>
        <begin position="149"/>
        <end position="156"/>
    </location>
</feature>
<feature type="strand" evidence="7">
    <location>
        <begin position="158"/>
        <end position="160"/>
    </location>
</feature>
<feature type="strand" evidence="7">
    <location>
        <begin position="162"/>
        <end position="168"/>
    </location>
</feature>
<feature type="helix" evidence="7">
    <location>
        <begin position="183"/>
        <end position="196"/>
    </location>
</feature>
<feature type="turn" evidence="7">
    <location>
        <begin position="197"/>
        <end position="200"/>
    </location>
</feature>
<feature type="strand" evidence="7">
    <location>
        <begin position="210"/>
        <end position="218"/>
    </location>
</feature>
<feature type="strand" evidence="7">
    <location>
        <begin position="224"/>
        <end position="229"/>
    </location>
</feature>
<feature type="strand" evidence="7">
    <location>
        <begin position="239"/>
        <end position="246"/>
    </location>
</feature>
<feature type="turn" evidence="7">
    <location>
        <begin position="254"/>
        <end position="259"/>
    </location>
</feature>
<feature type="strand" evidence="7">
    <location>
        <begin position="260"/>
        <end position="264"/>
    </location>
</feature>
<accession>Q15013</accession>
<accession>B4DLV3</accession>
<accession>E9PAT7</accession>
<accession>Q6IBB1</accession>
<reference key="1">
    <citation type="journal article" date="1995" name="DNA Res.">
        <title>Prediction of the coding sequences of unidentified human genes. III. The coding sequences of 40 new genes (KIAA0081-KIAA0120) deduced by analysis of cDNA clones from human cell line KG-1.</title>
        <authorList>
            <person name="Nagase T."/>
            <person name="Miyajima N."/>
            <person name="Tanaka A."/>
            <person name="Sazuka T."/>
            <person name="Seki N."/>
            <person name="Sato S."/>
            <person name="Tabata S."/>
            <person name="Ishikawa K."/>
            <person name="Kawarabayasi Y."/>
            <person name="Kotani H."/>
            <person name="Nomura N."/>
        </authorList>
    </citation>
    <scope>NUCLEOTIDE SEQUENCE [LARGE SCALE MRNA] (ISOFORM 1)</scope>
    <source>
        <tissue>Bone marrow</tissue>
    </source>
</reference>
<reference key="2">
    <citation type="journal article" date="2004" name="Nat. Genet.">
        <title>Complete sequencing and characterization of 21,243 full-length human cDNAs.</title>
        <authorList>
            <person name="Ota T."/>
            <person name="Suzuki Y."/>
            <person name="Nishikawa T."/>
            <person name="Otsuki T."/>
            <person name="Sugiyama T."/>
            <person name="Irie R."/>
            <person name="Wakamatsu A."/>
            <person name="Hayashi K."/>
            <person name="Sato H."/>
            <person name="Nagai K."/>
            <person name="Kimura K."/>
            <person name="Makita H."/>
            <person name="Sekine M."/>
            <person name="Obayashi M."/>
            <person name="Nishi T."/>
            <person name="Shibahara T."/>
            <person name="Tanaka T."/>
            <person name="Ishii S."/>
            <person name="Yamamoto J."/>
            <person name="Saito K."/>
            <person name="Kawai Y."/>
            <person name="Isono Y."/>
            <person name="Nakamura Y."/>
            <person name="Nagahari K."/>
            <person name="Murakami K."/>
            <person name="Yasuda T."/>
            <person name="Iwayanagi T."/>
            <person name="Wagatsuma M."/>
            <person name="Shiratori A."/>
            <person name="Sudo H."/>
            <person name="Hosoiri T."/>
            <person name="Kaku Y."/>
            <person name="Kodaira H."/>
            <person name="Kondo H."/>
            <person name="Sugawara M."/>
            <person name="Takahashi M."/>
            <person name="Kanda K."/>
            <person name="Yokoi T."/>
            <person name="Furuya T."/>
            <person name="Kikkawa E."/>
            <person name="Omura Y."/>
            <person name="Abe K."/>
            <person name="Kamihara K."/>
            <person name="Katsuta N."/>
            <person name="Sato K."/>
            <person name="Tanikawa M."/>
            <person name="Yamazaki M."/>
            <person name="Ninomiya K."/>
            <person name="Ishibashi T."/>
            <person name="Yamashita H."/>
            <person name="Murakawa K."/>
            <person name="Fujimori K."/>
            <person name="Tanai H."/>
            <person name="Kimata M."/>
            <person name="Watanabe M."/>
            <person name="Hiraoka S."/>
            <person name="Chiba Y."/>
            <person name="Ishida S."/>
            <person name="Ono Y."/>
            <person name="Takiguchi S."/>
            <person name="Watanabe S."/>
            <person name="Yosida M."/>
            <person name="Hotuta T."/>
            <person name="Kusano J."/>
            <person name="Kanehori K."/>
            <person name="Takahashi-Fujii A."/>
            <person name="Hara H."/>
            <person name="Tanase T.-O."/>
            <person name="Nomura Y."/>
            <person name="Togiya S."/>
            <person name="Komai F."/>
            <person name="Hara R."/>
            <person name="Takeuchi K."/>
            <person name="Arita M."/>
            <person name="Imose N."/>
            <person name="Musashino K."/>
            <person name="Yuuki H."/>
            <person name="Oshima A."/>
            <person name="Sasaki N."/>
            <person name="Aotsuka S."/>
            <person name="Yoshikawa Y."/>
            <person name="Matsunawa H."/>
            <person name="Ichihara T."/>
            <person name="Shiohata N."/>
            <person name="Sano S."/>
            <person name="Moriya S."/>
            <person name="Momiyama H."/>
            <person name="Satoh N."/>
            <person name="Takami S."/>
            <person name="Terashima Y."/>
            <person name="Suzuki O."/>
            <person name="Nakagawa S."/>
            <person name="Senoh A."/>
            <person name="Mizoguchi H."/>
            <person name="Goto Y."/>
            <person name="Shimizu F."/>
            <person name="Wakebe H."/>
            <person name="Hishigaki H."/>
            <person name="Watanabe T."/>
            <person name="Sugiyama A."/>
            <person name="Takemoto M."/>
            <person name="Kawakami B."/>
            <person name="Yamazaki M."/>
            <person name="Watanabe K."/>
            <person name="Kumagai A."/>
            <person name="Itakura S."/>
            <person name="Fukuzumi Y."/>
            <person name="Fujimori Y."/>
            <person name="Komiyama M."/>
            <person name="Tashiro H."/>
            <person name="Tanigami A."/>
            <person name="Fujiwara T."/>
            <person name="Ono T."/>
            <person name="Yamada K."/>
            <person name="Fujii Y."/>
            <person name="Ozaki K."/>
            <person name="Hirao M."/>
            <person name="Ohmori Y."/>
            <person name="Kawabata A."/>
            <person name="Hikiji T."/>
            <person name="Kobatake N."/>
            <person name="Inagaki H."/>
            <person name="Ikema Y."/>
            <person name="Okamoto S."/>
            <person name="Okitani R."/>
            <person name="Kawakami T."/>
            <person name="Noguchi S."/>
            <person name="Itoh T."/>
            <person name="Shigeta K."/>
            <person name="Senba T."/>
            <person name="Matsumura K."/>
            <person name="Nakajima Y."/>
            <person name="Mizuno T."/>
            <person name="Morinaga M."/>
            <person name="Sasaki M."/>
            <person name="Togashi T."/>
            <person name="Oyama M."/>
            <person name="Hata H."/>
            <person name="Watanabe M."/>
            <person name="Komatsu T."/>
            <person name="Mizushima-Sugano J."/>
            <person name="Satoh T."/>
            <person name="Shirai Y."/>
            <person name="Takahashi Y."/>
            <person name="Nakagawa K."/>
            <person name="Okumura K."/>
            <person name="Nagase T."/>
            <person name="Nomura N."/>
            <person name="Kikuchi H."/>
            <person name="Masuho Y."/>
            <person name="Yamashita R."/>
            <person name="Nakai K."/>
            <person name="Yada T."/>
            <person name="Nakamura Y."/>
            <person name="Ohara O."/>
            <person name="Isogai T."/>
            <person name="Sugano S."/>
        </authorList>
    </citation>
    <scope>NUCLEOTIDE SEQUENCE [LARGE SCALE MRNA] (ISOFORM 1)</scope>
    <source>
        <tissue>Brain</tissue>
    </source>
</reference>
<reference key="3">
    <citation type="submission" date="2004-06" db="EMBL/GenBank/DDBJ databases">
        <title>Cloning of human full open reading frames in Gateway(TM) system entry vector (pDONR201).</title>
        <authorList>
            <person name="Ebert L."/>
            <person name="Schick M."/>
            <person name="Neubert P."/>
            <person name="Schatten R."/>
            <person name="Henze S."/>
            <person name="Korn B."/>
        </authorList>
    </citation>
    <scope>NUCLEOTIDE SEQUENCE [LARGE SCALE MRNA] (ISOFORM 1)</scope>
</reference>
<reference key="4">
    <citation type="journal article" date="2003" name="Nature">
        <title>The DNA sequence and analysis of human chromosome 6.</title>
        <authorList>
            <person name="Mungall A.J."/>
            <person name="Palmer S.A."/>
            <person name="Sims S.K."/>
            <person name="Edwards C.A."/>
            <person name="Ashurst J.L."/>
            <person name="Wilming L."/>
            <person name="Jones M.C."/>
            <person name="Horton R."/>
            <person name="Hunt S.E."/>
            <person name="Scott C.E."/>
            <person name="Gilbert J.G.R."/>
            <person name="Clamp M.E."/>
            <person name="Bethel G."/>
            <person name="Milne S."/>
            <person name="Ainscough R."/>
            <person name="Almeida J.P."/>
            <person name="Ambrose K.D."/>
            <person name="Andrews T.D."/>
            <person name="Ashwell R.I.S."/>
            <person name="Babbage A.K."/>
            <person name="Bagguley C.L."/>
            <person name="Bailey J."/>
            <person name="Banerjee R."/>
            <person name="Barker D.J."/>
            <person name="Barlow K.F."/>
            <person name="Bates K."/>
            <person name="Beare D.M."/>
            <person name="Beasley H."/>
            <person name="Beasley O."/>
            <person name="Bird C.P."/>
            <person name="Blakey S.E."/>
            <person name="Bray-Allen S."/>
            <person name="Brook J."/>
            <person name="Brown A.J."/>
            <person name="Brown J.Y."/>
            <person name="Burford D.C."/>
            <person name="Burrill W."/>
            <person name="Burton J."/>
            <person name="Carder C."/>
            <person name="Carter N.P."/>
            <person name="Chapman J.C."/>
            <person name="Clark S.Y."/>
            <person name="Clark G."/>
            <person name="Clee C.M."/>
            <person name="Clegg S."/>
            <person name="Cobley V."/>
            <person name="Collier R.E."/>
            <person name="Collins J.E."/>
            <person name="Colman L.K."/>
            <person name="Corby N.R."/>
            <person name="Coville G.J."/>
            <person name="Culley K.M."/>
            <person name="Dhami P."/>
            <person name="Davies J."/>
            <person name="Dunn M."/>
            <person name="Earthrowl M.E."/>
            <person name="Ellington A.E."/>
            <person name="Evans K.A."/>
            <person name="Faulkner L."/>
            <person name="Francis M.D."/>
            <person name="Frankish A."/>
            <person name="Frankland J."/>
            <person name="French L."/>
            <person name="Garner P."/>
            <person name="Garnett J."/>
            <person name="Ghori M.J."/>
            <person name="Gilby L.M."/>
            <person name="Gillson C.J."/>
            <person name="Glithero R.J."/>
            <person name="Grafham D.V."/>
            <person name="Grant M."/>
            <person name="Gribble S."/>
            <person name="Griffiths C."/>
            <person name="Griffiths M.N.D."/>
            <person name="Hall R."/>
            <person name="Halls K.S."/>
            <person name="Hammond S."/>
            <person name="Harley J.L."/>
            <person name="Hart E.A."/>
            <person name="Heath P.D."/>
            <person name="Heathcott R."/>
            <person name="Holmes S.J."/>
            <person name="Howden P.J."/>
            <person name="Howe K.L."/>
            <person name="Howell G.R."/>
            <person name="Huckle E."/>
            <person name="Humphray S.J."/>
            <person name="Humphries M.D."/>
            <person name="Hunt A.R."/>
            <person name="Johnson C.M."/>
            <person name="Joy A.A."/>
            <person name="Kay M."/>
            <person name="Keenan S.J."/>
            <person name="Kimberley A.M."/>
            <person name="King A."/>
            <person name="Laird G.K."/>
            <person name="Langford C."/>
            <person name="Lawlor S."/>
            <person name="Leongamornlert D.A."/>
            <person name="Leversha M."/>
            <person name="Lloyd C.R."/>
            <person name="Lloyd D.M."/>
            <person name="Loveland J.E."/>
            <person name="Lovell J."/>
            <person name="Martin S."/>
            <person name="Mashreghi-Mohammadi M."/>
            <person name="Maslen G.L."/>
            <person name="Matthews L."/>
            <person name="McCann O.T."/>
            <person name="McLaren S.J."/>
            <person name="McLay K."/>
            <person name="McMurray A."/>
            <person name="Moore M.J.F."/>
            <person name="Mullikin J.C."/>
            <person name="Niblett D."/>
            <person name="Nickerson T."/>
            <person name="Novik K.L."/>
            <person name="Oliver K."/>
            <person name="Overton-Larty E.K."/>
            <person name="Parker A."/>
            <person name="Patel R."/>
            <person name="Pearce A.V."/>
            <person name="Peck A.I."/>
            <person name="Phillimore B.J.C.T."/>
            <person name="Phillips S."/>
            <person name="Plumb R.W."/>
            <person name="Porter K.M."/>
            <person name="Ramsey Y."/>
            <person name="Ranby S.A."/>
            <person name="Rice C.M."/>
            <person name="Ross M.T."/>
            <person name="Searle S.M."/>
            <person name="Sehra H.K."/>
            <person name="Sheridan E."/>
            <person name="Skuce C.D."/>
            <person name="Smith S."/>
            <person name="Smith M."/>
            <person name="Spraggon L."/>
            <person name="Squares S.L."/>
            <person name="Steward C.A."/>
            <person name="Sycamore N."/>
            <person name="Tamlyn-Hall G."/>
            <person name="Tester J."/>
            <person name="Theaker A.J."/>
            <person name="Thomas D.W."/>
            <person name="Thorpe A."/>
            <person name="Tracey A."/>
            <person name="Tromans A."/>
            <person name="Tubby B."/>
            <person name="Wall M."/>
            <person name="Wallis J.M."/>
            <person name="West A.P."/>
            <person name="White S.S."/>
            <person name="Whitehead S.L."/>
            <person name="Whittaker H."/>
            <person name="Wild A."/>
            <person name="Willey D.J."/>
            <person name="Wilmer T.E."/>
            <person name="Wood J.M."/>
            <person name="Wray P.W."/>
            <person name="Wyatt J.C."/>
            <person name="Young L."/>
            <person name="Younger R.M."/>
            <person name="Bentley D.R."/>
            <person name="Coulson A."/>
            <person name="Durbin R.M."/>
            <person name="Hubbard T."/>
            <person name="Sulston J.E."/>
            <person name="Dunham I."/>
            <person name="Rogers J."/>
            <person name="Beck S."/>
        </authorList>
    </citation>
    <scope>NUCLEOTIDE SEQUENCE [LARGE SCALE GENOMIC DNA]</scope>
</reference>
<reference key="5">
    <citation type="journal article" date="2004" name="Genome Res.">
        <title>The status, quality, and expansion of the NIH full-length cDNA project: the Mammalian Gene Collection (MGC).</title>
        <authorList>
            <consortium name="The MGC Project Team"/>
        </authorList>
    </citation>
    <scope>NUCLEOTIDE SEQUENCE [LARGE SCALE MRNA] (ISOFORM 1)</scope>
    <source>
        <tissue>Lung</tissue>
    </source>
</reference>
<reference key="6">
    <citation type="submission" date="2003-04" db="EMBL/GenBank/DDBJ databases">
        <title>Full-length cDNA libraries and normalization.</title>
        <authorList>
            <person name="Li W.B."/>
            <person name="Gruber C."/>
            <person name="Jessee J."/>
            <person name="Polayes D."/>
        </authorList>
    </citation>
    <scope>NUCLEOTIDE SEQUENCE [LARGE SCALE MRNA] OF 1-224 (ISOFORM 2)</scope>
    <source>
        <tissue>Fetal brain</tissue>
    </source>
</reference>
<reference key="7">
    <citation type="journal article" date="2002" name="EMBO J.">
        <title>Identification of a MAD2-binding protein, CMT2, and its role in mitosis.</title>
        <authorList>
            <person name="Habu T."/>
            <person name="Kim S.H."/>
            <person name="Weinstein J."/>
            <person name="Matsumoto T."/>
        </authorList>
    </citation>
    <scope>POSSIBLE FUNCTION</scope>
    <scope>INTERACTION WITH MAD2L1</scope>
    <scope>SUBCELLULAR LOCATION</scope>
    <scope>DEVELOPMENTAL STAGE</scope>
</reference>
<reference key="8">
    <citation type="journal article" date="2008" name="Proc. Natl. Acad. Sci. U.S.A.">
        <title>A quantitative atlas of mitotic phosphorylation.</title>
        <authorList>
            <person name="Dephoure N."/>
            <person name="Zhou C."/>
            <person name="Villen J."/>
            <person name="Beausoleil S.A."/>
            <person name="Bakalarski C.E."/>
            <person name="Elledge S.J."/>
            <person name="Gygi S.P."/>
        </authorList>
    </citation>
    <scope>IDENTIFICATION BY MASS SPECTROMETRY [LARGE SCALE ANALYSIS]</scope>
    <source>
        <tissue>Cervix carcinoma</tissue>
    </source>
</reference>
<reference key="9">
    <citation type="journal article" date="2013" name="J. Proteome Res.">
        <title>Toward a comprehensive characterization of a human cancer cell phosphoproteome.</title>
        <authorList>
            <person name="Zhou H."/>
            <person name="Di Palma S."/>
            <person name="Preisinger C."/>
            <person name="Peng M."/>
            <person name="Polat A.N."/>
            <person name="Heck A.J."/>
            <person name="Mohammed S."/>
        </authorList>
    </citation>
    <scope>PHOSPHORYLATION [LARGE SCALE ANALYSIS] AT SER-102</scope>
    <scope>IDENTIFICATION BY MASS SPECTROMETRY [LARGE SCALE ANALYSIS]</scope>
    <source>
        <tissue>Erythroleukemia</tissue>
    </source>
</reference>
<reference key="10">
    <citation type="journal article" date="2007" name="Cell">
        <title>p31comet blocks Mad2 activation through structural mimicry.</title>
        <authorList>
            <person name="Yang M."/>
            <person name="Li B."/>
            <person name="Tomchick D.R."/>
            <person name="Machius M."/>
            <person name="Rizo J."/>
            <person name="Yu H."/>
            <person name="Luo X."/>
        </authorList>
    </citation>
    <scope>X-RAY CRYSTALLOGRAPHY (2.3 ANGSTROMS) OF 36-274 IN COMPLEX WITH MAD2L1</scope>
    <scope>FUNCTION</scope>
    <scope>SUBCELLULAR LOCATION</scope>
    <scope>INTERACTION WITH MAD2L1</scope>
    <scope>MUTAGENESIS OF GLN-83 AND PHE-191</scope>
</reference>
<organism>
    <name type="scientific">Homo sapiens</name>
    <name type="common">Human</name>
    <dbReference type="NCBI Taxonomy" id="9606"/>
    <lineage>
        <taxon>Eukaryota</taxon>
        <taxon>Metazoa</taxon>
        <taxon>Chordata</taxon>
        <taxon>Craniata</taxon>
        <taxon>Vertebrata</taxon>
        <taxon>Euteleostomi</taxon>
        <taxon>Mammalia</taxon>
        <taxon>Eutheria</taxon>
        <taxon>Euarchontoglires</taxon>
        <taxon>Primates</taxon>
        <taxon>Haplorrhini</taxon>
        <taxon>Catarrhini</taxon>
        <taxon>Hominidae</taxon>
        <taxon>Homo</taxon>
    </lineage>
</organism>
<keyword id="KW-0002">3D-structure</keyword>
<keyword id="KW-0025">Alternative splicing</keyword>
<keyword id="KW-0963">Cytoplasm</keyword>
<keyword id="KW-0206">Cytoskeleton</keyword>
<keyword id="KW-0539">Nucleus</keyword>
<keyword id="KW-0597">Phosphoprotein</keyword>
<keyword id="KW-1267">Proteomics identification</keyword>
<keyword id="KW-1185">Reference proteome</keyword>
<sequence length="274" mass="31052">MAAPEAEVLSSAAVPDLEWYEKSEETHASQIELLETSSTQEPLNASEAFCPRDCMVPVVFPGPVSQEGCCQFTCELLKHIMYQRQQLPLPYEQLKHFYRKPSPQAEEMLKKKPRATTEVSSRKCQQALAELESVLSHLEDFFARTLVPRVLILLGGNALSPKEFYELDLSLLAPYSVDQSLSTAACLRRLFRAIFMADAFSELQAPPLMGTVVMAQGHRNCGEDWFRPKLNYRVPSRGHKLTVTLSCGRPSIRTTAWEDYIWFQAPVTFKGFRE</sequence>
<comment type="function">
    <text evidence="2">May function to silence the spindle checkpoint and allow mitosis to proceed through anaphase by binding MAD2L1 after it has become dissociated from the MAD2L1-CDC20 complex.</text>
</comment>
<comment type="subunit">
    <text evidence="1 2">Interacts with MAD2L1.</text>
</comment>
<comment type="interaction">
    <interactant intactId="EBI-712181">
        <id>Q15013</id>
    </interactant>
    <interactant intactId="EBI-12903902">
        <id>Q8TC99</id>
        <label>FNDC8</label>
    </interactant>
    <organismsDiffer>false</organismsDiffer>
    <experiments>4</experiments>
</comment>
<comment type="interaction">
    <interactant intactId="EBI-712181">
        <id>Q15013</id>
    </interactant>
    <interactant intactId="EBI-10172004">
        <id>Q8IX15-3</id>
        <label>HOMEZ</label>
    </interactant>
    <organismsDiffer>false</organismsDiffer>
    <experiments>3</experiments>
</comment>
<comment type="interaction">
    <interactant intactId="EBI-712181">
        <id>Q15013</id>
    </interactant>
    <interactant intactId="EBI-749162">
        <id>Q9BT40</id>
        <label>INPP5K</label>
    </interactant>
    <organismsDiffer>false</organismsDiffer>
    <experiments>14</experiments>
</comment>
<comment type="interaction">
    <interactant intactId="EBI-712181">
        <id>Q15013</id>
    </interactant>
    <interactant intactId="EBI-78203">
        <id>Q13257</id>
        <label>MAD2L1</label>
    </interactant>
    <organismsDiffer>false</organismsDiffer>
    <experiments>20</experiments>
</comment>
<comment type="interaction">
    <interactant intactId="EBI-712181">
        <id>Q15013</id>
    </interactant>
    <interactant intactId="EBI-372942">
        <id>Q13287</id>
        <label>NMI</label>
    </interactant>
    <organismsDiffer>false</organismsDiffer>
    <experiments>3</experiments>
</comment>
<comment type="interaction">
    <interactant intactId="EBI-712181">
        <id>Q15013</id>
    </interactant>
    <interactant intactId="EBI-989213">
        <id>Q562F6</id>
        <label>SGO2</label>
    </interactant>
    <organismsDiffer>false</organismsDiffer>
    <experiments>2</experiments>
</comment>
<comment type="interaction">
    <interactant intactId="EBI-712181">
        <id>Q15013</id>
    </interactant>
    <interactant intactId="EBI-358993">
        <id>Q15645</id>
        <label>TRIP13</label>
    </interactant>
    <organismsDiffer>false</organismsDiffer>
    <experiments>9</experiments>
</comment>
<comment type="interaction">
    <interactant intactId="EBI-712181">
        <id>Q15013</id>
    </interactant>
    <interactant intactId="EBI-10176632">
        <id>O43829</id>
        <label>ZBTB14</label>
    </interactant>
    <organismsDiffer>false</organismsDiffer>
    <experiments>6</experiments>
</comment>
<comment type="interaction">
    <interactant intactId="EBI-712181">
        <id>Q15013</id>
    </interactant>
    <interactant intactId="EBI-751960">
        <id>O95125</id>
        <label>ZNF202</label>
    </interactant>
    <organismsDiffer>false</organismsDiffer>
    <experiments>3</experiments>
</comment>
<comment type="subcellular location">
    <subcellularLocation>
        <location>Nucleus</location>
    </subcellularLocation>
    <subcellularLocation>
        <location>Cytoplasm</location>
        <location>Cytoskeleton</location>
        <location>Spindle</location>
    </subcellularLocation>
    <text>During early mitosis, unevenly distributed throughout the nucleoplasm. From metaphase to anaphase, concentrated on the spindle.</text>
</comment>
<comment type="alternative products">
    <event type="alternative splicing"/>
    <isoform>
        <id>Q15013-1</id>
        <name>1</name>
        <sequence type="displayed"/>
    </isoform>
    <isoform>
        <id>Q15013-3</id>
        <name>2</name>
        <sequence type="described" ref="VSP_046268"/>
    </isoform>
</comment>
<comment type="developmental stage">
    <text evidence="1">During the cell cycle, levels increase and then remain constant until late mitosis after which they drop.</text>
</comment>
<comment type="similarity">
    <text evidence="5">Belongs to the MAD2L1BP family.</text>
</comment>
<comment type="sequence caution" evidence="5">
    <conflict type="erroneous initiation">
        <sequence resource="EMBL-CDS" id="BAG59665"/>
    </conflict>
</comment>
<evidence type="ECO:0000269" key="1">
    <source>
    </source>
</evidence>
<evidence type="ECO:0000269" key="2">
    <source>
    </source>
</evidence>
<evidence type="ECO:0000303" key="3">
    <source>
    </source>
</evidence>
<evidence type="ECO:0000303" key="4">
    <source ref="6"/>
</evidence>
<evidence type="ECO:0000305" key="5"/>
<evidence type="ECO:0007744" key="6">
    <source>
    </source>
</evidence>
<evidence type="ECO:0007829" key="7">
    <source>
        <dbReference type="PDB" id="2QYF"/>
    </source>
</evidence>
<dbReference type="EMBL" id="D14811">
    <property type="protein sequence ID" value="BAA03552.1"/>
    <property type="molecule type" value="mRNA"/>
</dbReference>
<dbReference type="EMBL" id="AK297172">
    <property type="protein sequence ID" value="BAG59665.1"/>
    <property type="status" value="ALT_INIT"/>
    <property type="molecule type" value="mRNA"/>
</dbReference>
<dbReference type="EMBL" id="CR456893">
    <property type="protein sequence ID" value="CAG33174.1"/>
    <property type="molecule type" value="mRNA"/>
</dbReference>
<dbReference type="EMBL" id="AL136131">
    <property type="status" value="NOT_ANNOTATED_CDS"/>
    <property type="molecule type" value="Genomic_DNA"/>
</dbReference>
<dbReference type="EMBL" id="AL353602">
    <property type="status" value="NOT_ANNOTATED_CDS"/>
    <property type="molecule type" value="Genomic_DNA"/>
</dbReference>
<dbReference type="EMBL" id="BC002904">
    <property type="protein sequence ID" value="AAH02904.1"/>
    <property type="molecule type" value="mRNA"/>
</dbReference>
<dbReference type="EMBL" id="AL537692">
    <property type="status" value="NOT_ANNOTATED_CDS"/>
    <property type="molecule type" value="mRNA"/>
</dbReference>
<dbReference type="CCDS" id="CCDS47431.1">
    <molecule id="Q15013-3"/>
</dbReference>
<dbReference type="CCDS" id="CCDS4904.1">
    <molecule id="Q15013-1"/>
</dbReference>
<dbReference type="RefSeq" id="NP_001003690.1">
    <molecule id="Q15013-3"/>
    <property type="nucleotide sequence ID" value="NM_001003690.2"/>
</dbReference>
<dbReference type="RefSeq" id="NP_055443.1">
    <molecule id="Q15013-1"/>
    <property type="nucleotide sequence ID" value="NM_014628.3"/>
</dbReference>
<dbReference type="PDB" id="2QYF">
    <property type="method" value="X-ray"/>
    <property type="resolution" value="2.30 A"/>
    <property type="chains" value="B/D=36-274"/>
</dbReference>
<dbReference type="PDB" id="6F0X">
    <property type="method" value="EM"/>
    <property type="resolution" value="4.60 A"/>
    <property type="chains" value="P=1-274"/>
</dbReference>
<dbReference type="PDBsum" id="2QYF"/>
<dbReference type="PDBsum" id="6F0X"/>
<dbReference type="EMDB" id="EMD-4166"/>
<dbReference type="SMR" id="Q15013"/>
<dbReference type="BioGRID" id="114955">
    <property type="interactions" value="70"/>
</dbReference>
<dbReference type="DIP" id="DIP-34492N"/>
<dbReference type="FunCoup" id="Q15013">
    <property type="interactions" value="3324"/>
</dbReference>
<dbReference type="IntAct" id="Q15013">
    <property type="interactions" value="48"/>
</dbReference>
<dbReference type="MINT" id="Q15013"/>
<dbReference type="STRING" id="9606.ENSP00000410818"/>
<dbReference type="iPTMnet" id="Q15013"/>
<dbReference type="PhosphoSitePlus" id="Q15013"/>
<dbReference type="BioMuta" id="MAD2L1BP"/>
<dbReference type="jPOST" id="Q15013"/>
<dbReference type="MassIVE" id="Q15013"/>
<dbReference type="PaxDb" id="9606-ENSP00000410818"/>
<dbReference type="PeptideAtlas" id="Q15013"/>
<dbReference type="ProteomicsDB" id="19077"/>
<dbReference type="ProteomicsDB" id="60365">
    <molecule id="Q15013-1"/>
</dbReference>
<dbReference type="Pumba" id="Q15013"/>
<dbReference type="Antibodypedia" id="30554">
    <property type="antibodies" value="317 antibodies from 32 providers"/>
</dbReference>
<dbReference type="DNASU" id="9587"/>
<dbReference type="Ensembl" id="ENST00000372171.5">
    <molecule id="Q15013-1"/>
    <property type="protein sequence ID" value="ENSP00000361244.4"/>
    <property type="gene ID" value="ENSG00000124688.14"/>
</dbReference>
<dbReference type="Ensembl" id="ENST00000451025.6">
    <molecule id="Q15013-3"/>
    <property type="protein sequence ID" value="ENSP00000410818.2"/>
    <property type="gene ID" value="ENSG00000124688.14"/>
</dbReference>
<dbReference type="GeneID" id="9587"/>
<dbReference type="KEGG" id="hsa:9587"/>
<dbReference type="MANE-Select" id="ENST00000372171.5">
    <property type="protein sequence ID" value="ENSP00000361244.4"/>
    <property type="RefSeq nucleotide sequence ID" value="NM_014628.3"/>
    <property type="RefSeq protein sequence ID" value="NP_055443.1"/>
</dbReference>
<dbReference type="UCSC" id="uc003ovu.4">
    <molecule id="Q15013-1"/>
    <property type="organism name" value="human"/>
</dbReference>
<dbReference type="AGR" id="HGNC:21059"/>
<dbReference type="CTD" id="9587"/>
<dbReference type="DisGeNET" id="9587"/>
<dbReference type="GeneCards" id="MAD2L1BP"/>
<dbReference type="HGNC" id="HGNC:21059">
    <property type="gene designation" value="MAD2L1BP"/>
</dbReference>
<dbReference type="HPA" id="ENSG00000124688">
    <property type="expression patterns" value="Low tissue specificity"/>
</dbReference>
<dbReference type="MIM" id="618136">
    <property type="type" value="gene"/>
</dbReference>
<dbReference type="neXtProt" id="NX_Q15013"/>
<dbReference type="OpenTargets" id="ENSG00000124688"/>
<dbReference type="PharmGKB" id="PA134911020"/>
<dbReference type="VEuPathDB" id="HostDB:ENSG00000124688"/>
<dbReference type="eggNOG" id="ENOG502QTUF">
    <property type="taxonomic scope" value="Eukaryota"/>
</dbReference>
<dbReference type="GeneTree" id="ENSGT00390000003812"/>
<dbReference type="HOGENOM" id="CLU_079654_0_0_1"/>
<dbReference type="InParanoid" id="Q15013"/>
<dbReference type="OMA" id="KCQQVLM"/>
<dbReference type="OrthoDB" id="6334764at2759"/>
<dbReference type="PAN-GO" id="Q15013">
    <property type="GO annotations" value="1 GO annotation based on evolutionary models"/>
</dbReference>
<dbReference type="PhylomeDB" id="Q15013"/>
<dbReference type="TreeFam" id="TF331730"/>
<dbReference type="PathwayCommons" id="Q15013"/>
<dbReference type="SignaLink" id="Q15013"/>
<dbReference type="SIGNOR" id="Q15013"/>
<dbReference type="BioGRID-ORCS" id="9587">
    <property type="hits" value="251 hits in 1168 CRISPR screens"/>
</dbReference>
<dbReference type="ChiTaRS" id="MAD2L1BP">
    <property type="organism name" value="human"/>
</dbReference>
<dbReference type="EvolutionaryTrace" id="Q15013"/>
<dbReference type="GeneWiki" id="MAD2L1BP"/>
<dbReference type="GenomeRNAi" id="9587"/>
<dbReference type="Pharos" id="Q15013">
    <property type="development level" value="Tbio"/>
</dbReference>
<dbReference type="PRO" id="PR:Q15013"/>
<dbReference type="Proteomes" id="UP000005640">
    <property type="component" value="Chromosome 6"/>
</dbReference>
<dbReference type="RNAct" id="Q15013">
    <property type="molecule type" value="protein"/>
</dbReference>
<dbReference type="Bgee" id="ENSG00000124688">
    <property type="expression patterns" value="Expressed in mucosa of transverse colon and 187 other cell types or tissues"/>
</dbReference>
<dbReference type="GO" id="GO:0005737">
    <property type="term" value="C:cytoplasm"/>
    <property type="evidence" value="ECO:0000314"/>
    <property type="project" value="UniProtKB"/>
</dbReference>
<dbReference type="GO" id="GO:0031965">
    <property type="term" value="C:nuclear membrane"/>
    <property type="evidence" value="ECO:0000314"/>
    <property type="project" value="HPA"/>
</dbReference>
<dbReference type="GO" id="GO:0005730">
    <property type="term" value="C:nucleolus"/>
    <property type="evidence" value="ECO:0000314"/>
    <property type="project" value="HPA"/>
</dbReference>
<dbReference type="GO" id="GO:0005654">
    <property type="term" value="C:nucleoplasm"/>
    <property type="evidence" value="ECO:0000314"/>
    <property type="project" value="HPA"/>
</dbReference>
<dbReference type="GO" id="GO:0005634">
    <property type="term" value="C:nucleus"/>
    <property type="evidence" value="ECO:0000314"/>
    <property type="project" value="UniProtKB"/>
</dbReference>
<dbReference type="GO" id="GO:0005819">
    <property type="term" value="C:spindle"/>
    <property type="evidence" value="ECO:0007669"/>
    <property type="project" value="UniProtKB-SubCell"/>
</dbReference>
<dbReference type="GO" id="GO:1902426">
    <property type="term" value="P:deactivation of mitotic spindle assembly checkpoint"/>
    <property type="evidence" value="ECO:0000315"/>
    <property type="project" value="UniProtKB"/>
</dbReference>
<dbReference type="GO" id="GO:0007096">
    <property type="term" value="P:regulation of exit from mitosis"/>
    <property type="evidence" value="ECO:0000315"/>
    <property type="project" value="UniProtKB"/>
</dbReference>
<dbReference type="FunFam" id="3.30.900.20:FF:000001">
    <property type="entry name" value="MAD2L1 binding protein"/>
    <property type="match status" value="1"/>
</dbReference>
<dbReference type="Gene3D" id="3.30.900.20">
    <property type="match status" value="1"/>
</dbReference>
<dbReference type="InterPro" id="IPR009511">
    <property type="entry name" value="MAD1/Cdc20-bound-Mad2-bd"/>
</dbReference>
<dbReference type="InterPro" id="IPR053729">
    <property type="entry name" value="MAD2L1BP_domain_sf"/>
</dbReference>
<dbReference type="PANTHER" id="PTHR15681">
    <property type="entry name" value="MAD2L1-BINDING PROTEIN"/>
    <property type="match status" value="1"/>
</dbReference>
<dbReference type="PANTHER" id="PTHR15681:SF1">
    <property type="entry name" value="MAD2L1-BINDING PROTEIN"/>
    <property type="match status" value="1"/>
</dbReference>
<dbReference type="Pfam" id="PF06581">
    <property type="entry name" value="p31comet"/>
    <property type="match status" value="1"/>
</dbReference>